<reference key="1">
    <citation type="journal article" date="2007" name="PLoS ONE">
        <title>Paradoxical DNA repair and peroxide resistance gene conservation in Bacillus pumilus SAFR-032.</title>
        <authorList>
            <person name="Gioia J."/>
            <person name="Yerrapragada S."/>
            <person name="Qin X."/>
            <person name="Jiang H."/>
            <person name="Igboeli O.C."/>
            <person name="Muzny D."/>
            <person name="Dugan-Rocha S."/>
            <person name="Ding Y."/>
            <person name="Hawes A."/>
            <person name="Liu W."/>
            <person name="Perez L."/>
            <person name="Kovar C."/>
            <person name="Dinh H."/>
            <person name="Lee S."/>
            <person name="Nazareth L."/>
            <person name="Blyth P."/>
            <person name="Holder M."/>
            <person name="Buhay C."/>
            <person name="Tirumalai M.R."/>
            <person name="Liu Y."/>
            <person name="Dasgupta I."/>
            <person name="Bokhetache L."/>
            <person name="Fujita M."/>
            <person name="Karouia F."/>
            <person name="Eswara Moorthy P."/>
            <person name="Siefert J."/>
            <person name="Uzman A."/>
            <person name="Buzumbo P."/>
            <person name="Verma A."/>
            <person name="Zwiya H."/>
            <person name="McWilliams B.D."/>
            <person name="Olowu A."/>
            <person name="Clinkenbeard K.D."/>
            <person name="Newcombe D."/>
            <person name="Golebiewski L."/>
            <person name="Petrosino J.F."/>
            <person name="Nicholson W.L."/>
            <person name="Fox G.E."/>
            <person name="Venkateswaran K."/>
            <person name="Highlander S.K."/>
            <person name="Weinstock G.M."/>
        </authorList>
    </citation>
    <scope>NUCLEOTIDE SEQUENCE [LARGE SCALE GENOMIC DNA]</scope>
    <source>
        <strain>SAFR-032</strain>
    </source>
</reference>
<feature type="chain" id="PRO_1000059835" description="Isopentenyl-diphosphate delta-isomerase">
    <location>
        <begin position="1"/>
        <end position="355"/>
    </location>
</feature>
<feature type="binding site" evidence="1">
    <location>
        <begin position="6"/>
        <end position="7"/>
    </location>
    <ligand>
        <name>substrate</name>
    </ligand>
</feature>
<feature type="binding site" evidence="1">
    <location>
        <begin position="62"/>
        <end position="64"/>
    </location>
    <ligand>
        <name>FMN</name>
        <dbReference type="ChEBI" id="CHEBI:58210"/>
    </ligand>
</feature>
<feature type="binding site" evidence="1">
    <location>
        <position position="93"/>
    </location>
    <ligand>
        <name>FMN</name>
        <dbReference type="ChEBI" id="CHEBI:58210"/>
    </ligand>
</feature>
<feature type="binding site" evidence="1">
    <location>
        <position position="122"/>
    </location>
    <ligand>
        <name>FMN</name>
        <dbReference type="ChEBI" id="CHEBI:58210"/>
    </ligand>
</feature>
<feature type="binding site" evidence="1">
    <location>
        <position position="152"/>
    </location>
    <ligand>
        <name>substrate</name>
    </ligand>
</feature>
<feature type="binding site" evidence="1">
    <location>
        <position position="153"/>
    </location>
    <ligand>
        <name>Mg(2+)</name>
        <dbReference type="ChEBI" id="CHEBI:18420"/>
    </ligand>
</feature>
<feature type="binding site" evidence="1">
    <location>
        <position position="184"/>
    </location>
    <ligand>
        <name>FMN</name>
        <dbReference type="ChEBI" id="CHEBI:58210"/>
    </ligand>
</feature>
<feature type="binding site" evidence="1">
    <location>
        <position position="214"/>
    </location>
    <ligand>
        <name>FMN</name>
        <dbReference type="ChEBI" id="CHEBI:58210"/>
    </ligand>
</feature>
<feature type="binding site" evidence="1">
    <location>
        <begin position="258"/>
        <end position="259"/>
    </location>
    <ligand>
        <name>FMN</name>
        <dbReference type="ChEBI" id="CHEBI:58210"/>
    </ligand>
</feature>
<feature type="binding site" evidence="1">
    <location>
        <begin position="280"/>
        <end position="281"/>
    </location>
    <ligand>
        <name>FMN</name>
        <dbReference type="ChEBI" id="CHEBI:58210"/>
    </ligand>
</feature>
<evidence type="ECO:0000255" key="1">
    <source>
        <dbReference type="HAMAP-Rule" id="MF_00354"/>
    </source>
</evidence>
<protein>
    <recommendedName>
        <fullName evidence="1">Isopentenyl-diphosphate delta-isomerase</fullName>
        <shortName evidence="1">IPP isomerase</shortName>
        <ecNumber evidence="1">5.3.3.2</ecNumber>
    </recommendedName>
    <alternativeName>
        <fullName evidence="1">Isopentenyl diphosphate:dimethylallyl diphosphate isomerase</fullName>
    </alternativeName>
    <alternativeName>
        <fullName evidence="1">Isopentenyl pyrophosphate isomerase</fullName>
    </alternativeName>
    <alternativeName>
        <fullName evidence="1">Type 2 isopentenyl diphosphate isomerase</fullName>
        <shortName evidence="1">IDI-2</shortName>
    </alternativeName>
</protein>
<organism>
    <name type="scientific">Bacillus pumilus (strain SAFR-032)</name>
    <dbReference type="NCBI Taxonomy" id="315750"/>
    <lineage>
        <taxon>Bacteria</taxon>
        <taxon>Bacillati</taxon>
        <taxon>Bacillota</taxon>
        <taxon>Bacilli</taxon>
        <taxon>Bacillales</taxon>
        <taxon>Bacillaceae</taxon>
        <taxon>Bacillus</taxon>
    </lineage>
</organism>
<name>IDI2_BACP2</name>
<proteinExistence type="inferred from homology"/>
<gene>
    <name evidence="1" type="primary">fni</name>
    <name type="ordered locus">BPUM_2020</name>
</gene>
<accession>A8FEM3</accession>
<sequence length="355" mass="38167">MTRAERKKQHIEHALSTGQHAETGLKDVSFVHVGLPDLATSQIDTHTTIGGLTFGSPIFINAMTGGGGKSTYEINRSLSIAAKETNIPVAVGSQMAALKDKEERRTYEVVRKVNPNGIVFANLGSEATIKQAKEAVEMLEANMLQIHLNVIQEIVMPEGDRDFRGALERIAAIAESVGVPVVVKEVGFGMSKETAKKLFHAGVAAVDIGGFGGTNFSKIENLRRQKALHYFDQWGIPTAASLAEVHTSFPDQTVLASGGIQDALDVTKSIALGASAAGLAGFFLKSLTDGGEKGLIADMIDLQEDVKMMMTVLGAKTIEELRQTQVVISGDTSHWLKERGIDTTYYSVRTNKKKG</sequence>
<dbReference type="EC" id="5.3.3.2" evidence="1"/>
<dbReference type="EMBL" id="CP000813">
    <property type="protein sequence ID" value="ABV62690.1"/>
    <property type="molecule type" value="Genomic_DNA"/>
</dbReference>
<dbReference type="RefSeq" id="WP_012010397.1">
    <property type="nucleotide sequence ID" value="NC_009848.4"/>
</dbReference>
<dbReference type="SMR" id="A8FEM3"/>
<dbReference type="STRING" id="315750.BPUM_2020"/>
<dbReference type="GeneID" id="5621285"/>
<dbReference type="KEGG" id="bpu:BPUM_2020"/>
<dbReference type="eggNOG" id="COG1304">
    <property type="taxonomic scope" value="Bacteria"/>
</dbReference>
<dbReference type="HOGENOM" id="CLU_065515_0_0_9"/>
<dbReference type="OrthoDB" id="9795032at2"/>
<dbReference type="Proteomes" id="UP000001355">
    <property type="component" value="Chromosome"/>
</dbReference>
<dbReference type="GO" id="GO:0005737">
    <property type="term" value="C:cytoplasm"/>
    <property type="evidence" value="ECO:0007669"/>
    <property type="project" value="UniProtKB-SubCell"/>
</dbReference>
<dbReference type="GO" id="GO:0010181">
    <property type="term" value="F:FMN binding"/>
    <property type="evidence" value="ECO:0007669"/>
    <property type="project" value="UniProtKB-UniRule"/>
</dbReference>
<dbReference type="GO" id="GO:0004452">
    <property type="term" value="F:isopentenyl-diphosphate delta-isomerase activity"/>
    <property type="evidence" value="ECO:0007669"/>
    <property type="project" value="UniProtKB-UniRule"/>
</dbReference>
<dbReference type="GO" id="GO:0000287">
    <property type="term" value="F:magnesium ion binding"/>
    <property type="evidence" value="ECO:0007669"/>
    <property type="project" value="UniProtKB-UniRule"/>
</dbReference>
<dbReference type="GO" id="GO:0070402">
    <property type="term" value="F:NADPH binding"/>
    <property type="evidence" value="ECO:0007669"/>
    <property type="project" value="UniProtKB-UniRule"/>
</dbReference>
<dbReference type="GO" id="GO:0016491">
    <property type="term" value="F:oxidoreductase activity"/>
    <property type="evidence" value="ECO:0007669"/>
    <property type="project" value="InterPro"/>
</dbReference>
<dbReference type="GO" id="GO:0008299">
    <property type="term" value="P:isoprenoid biosynthetic process"/>
    <property type="evidence" value="ECO:0007669"/>
    <property type="project" value="UniProtKB-UniRule"/>
</dbReference>
<dbReference type="CDD" id="cd02811">
    <property type="entry name" value="IDI-2_FMN"/>
    <property type="match status" value="1"/>
</dbReference>
<dbReference type="Gene3D" id="3.20.20.70">
    <property type="entry name" value="Aldolase class I"/>
    <property type="match status" value="1"/>
</dbReference>
<dbReference type="HAMAP" id="MF_00354">
    <property type="entry name" value="Idi_2"/>
    <property type="match status" value="1"/>
</dbReference>
<dbReference type="InterPro" id="IPR013785">
    <property type="entry name" value="Aldolase_TIM"/>
</dbReference>
<dbReference type="InterPro" id="IPR000262">
    <property type="entry name" value="FMN-dep_DH"/>
</dbReference>
<dbReference type="InterPro" id="IPR011179">
    <property type="entry name" value="IPdP_isomerase"/>
</dbReference>
<dbReference type="NCBIfam" id="TIGR02151">
    <property type="entry name" value="IPP_isom_2"/>
    <property type="match status" value="1"/>
</dbReference>
<dbReference type="PANTHER" id="PTHR43665">
    <property type="entry name" value="ISOPENTENYL-DIPHOSPHATE DELTA-ISOMERASE"/>
    <property type="match status" value="1"/>
</dbReference>
<dbReference type="PANTHER" id="PTHR43665:SF1">
    <property type="entry name" value="ISOPENTENYL-DIPHOSPHATE DELTA-ISOMERASE"/>
    <property type="match status" value="1"/>
</dbReference>
<dbReference type="Pfam" id="PF01070">
    <property type="entry name" value="FMN_dh"/>
    <property type="match status" value="1"/>
</dbReference>
<dbReference type="PIRSF" id="PIRSF003314">
    <property type="entry name" value="IPP_isomerase"/>
    <property type="match status" value="1"/>
</dbReference>
<dbReference type="SMART" id="SM01240">
    <property type="entry name" value="IMPDH"/>
    <property type="match status" value="1"/>
</dbReference>
<dbReference type="SUPFAM" id="SSF51395">
    <property type="entry name" value="FMN-linked oxidoreductases"/>
    <property type="match status" value="1"/>
</dbReference>
<keyword id="KW-0963">Cytoplasm</keyword>
<keyword id="KW-0285">Flavoprotein</keyword>
<keyword id="KW-0288">FMN</keyword>
<keyword id="KW-0413">Isomerase</keyword>
<keyword id="KW-0414">Isoprene biosynthesis</keyword>
<keyword id="KW-0460">Magnesium</keyword>
<keyword id="KW-0479">Metal-binding</keyword>
<keyword id="KW-0521">NADP</keyword>
<comment type="function">
    <text evidence="1">Involved in the biosynthesis of isoprenoids. Catalyzes the 1,3-allylic rearrangement of the homoallylic substrate isopentenyl (IPP) to its allylic isomer, dimethylallyl diphosphate (DMAPP).</text>
</comment>
<comment type="catalytic activity">
    <reaction evidence="1">
        <text>isopentenyl diphosphate = dimethylallyl diphosphate</text>
        <dbReference type="Rhea" id="RHEA:23284"/>
        <dbReference type="ChEBI" id="CHEBI:57623"/>
        <dbReference type="ChEBI" id="CHEBI:128769"/>
        <dbReference type="EC" id="5.3.3.2"/>
    </reaction>
</comment>
<comment type="cofactor">
    <cofactor evidence="1">
        <name>FMN</name>
        <dbReference type="ChEBI" id="CHEBI:58210"/>
    </cofactor>
</comment>
<comment type="cofactor">
    <cofactor evidence="1">
        <name>NADPH</name>
        <dbReference type="ChEBI" id="CHEBI:57783"/>
    </cofactor>
</comment>
<comment type="cofactor">
    <cofactor evidence="1">
        <name>Mg(2+)</name>
        <dbReference type="ChEBI" id="CHEBI:18420"/>
    </cofactor>
</comment>
<comment type="subunit">
    <text evidence="1">Homooctamer. Dimer of tetramers.</text>
</comment>
<comment type="subcellular location">
    <subcellularLocation>
        <location evidence="1">Cytoplasm</location>
    </subcellularLocation>
</comment>
<comment type="similarity">
    <text evidence="1">Belongs to the IPP isomerase type 2 family.</text>
</comment>